<keyword id="KW-0021">Allosteric enzyme</keyword>
<keyword id="KW-0067">ATP-binding</keyword>
<keyword id="KW-0963">Cytoplasm</keyword>
<keyword id="KW-0418">Kinase</keyword>
<keyword id="KW-0547">Nucleotide-binding</keyword>
<keyword id="KW-0665">Pyrimidine biosynthesis</keyword>
<keyword id="KW-0808">Transferase</keyword>
<name>PYRH_LISIN</name>
<sequence length="242" mass="26166">MDTPDYKRVVLKLSGEALAGNDGFGINPSVVNLISAQIKEVVELGVEVAIVVGGGNIWRGKLGSEMGMDRAAADQMGMLATIMNSLSLQDSLENIGVATRVQTSIDMRQIAEPYIRRKAIRHLEKGRVVIFAGGTGNPYFSTDTAAALRAAEIEADVILMAKNNVDGVYNADPKLDENAKKYEELSYLDVIKEGLEVMDTTASSLSMDNDIPLIVFSFTEQGNNIKRVILGEKIGTTVRGKK</sequence>
<gene>
    <name evidence="1" type="primary">pyrH</name>
    <name type="synonym">smbA</name>
    <name type="ordered locus">lin1350</name>
</gene>
<accession>P65928</accession>
<accession>Q92C41</accession>
<reference key="1">
    <citation type="journal article" date="2001" name="Science">
        <title>Comparative genomics of Listeria species.</title>
        <authorList>
            <person name="Glaser P."/>
            <person name="Frangeul L."/>
            <person name="Buchrieser C."/>
            <person name="Rusniok C."/>
            <person name="Amend A."/>
            <person name="Baquero F."/>
            <person name="Berche P."/>
            <person name="Bloecker H."/>
            <person name="Brandt P."/>
            <person name="Chakraborty T."/>
            <person name="Charbit A."/>
            <person name="Chetouani F."/>
            <person name="Couve E."/>
            <person name="de Daruvar A."/>
            <person name="Dehoux P."/>
            <person name="Domann E."/>
            <person name="Dominguez-Bernal G."/>
            <person name="Duchaud E."/>
            <person name="Durant L."/>
            <person name="Dussurget O."/>
            <person name="Entian K.-D."/>
            <person name="Fsihi H."/>
            <person name="Garcia-del Portillo F."/>
            <person name="Garrido P."/>
            <person name="Gautier L."/>
            <person name="Goebel W."/>
            <person name="Gomez-Lopez N."/>
            <person name="Hain T."/>
            <person name="Hauf J."/>
            <person name="Jackson D."/>
            <person name="Jones L.-M."/>
            <person name="Kaerst U."/>
            <person name="Kreft J."/>
            <person name="Kuhn M."/>
            <person name="Kunst F."/>
            <person name="Kurapkat G."/>
            <person name="Madueno E."/>
            <person name="Maitournam A."/>
            <person name="Mata Vicente J."/>
            <person name="Ng E."/>
            <person name="Nedjari H."/>
            <person name="Nordsiek G."/>
            <person name="Novella S."/>
            <person name="de Pablos B."/>
            <person name="Perez-Diaz J.-C."/>
            <person name="Purcell R."/>
            <person name="Remmel B."/>
            <person name="Rose M."/>
            <person name="Schlueter T."/>
            <person name="Simoes N."/>
            <person name="Tierrez A."/>
            <person name="Vazquez-Boland J.-A."/>
            <person name="Voss H."/>
            <person name="Wehland J."/>
            <person name="Cossart P."/>
        </authorList>
    </citation>
    <scope>NUCLEOTIDE SEQUENCE [LARGE SCALE GENOMIC DNA]</scope>
    <source>
        <strain>ATCC BAA-680 / CLIP 11262</strain>
    </source>
</reference>
<organism>
    <name type="scientific">Listeria innocua serovar 6a (strain ATCC BAA-680 / CLIP 11262)</name>
    <dbReference type="NCBI Taxonomy" id="272626"/>
    <lineage>
        <taxon>Bacteria</taxon>
        <taxon>Bacillati</taxon>
        <taxon>Bacillota</taxon>
        <taxon>Bacilli</taxon>
        <taxon>Bacillales</taxon>
        <taxon>Listeriaceae</taxon>
        <taxon>Listeria</taxon>
    </lineage>
</organism>
<proteinExistence type="inferred from homology"/>
<feature type="chain" id="PRO_0000143856" description="Uridylate kinase">
    <location>
        <begin position="1"/>
        <end position="242"/>
    </location>
</feature>
<feature type="region of interest" description="Involved in allosteric activation by GTP" evidence="1">
    <location>
        <begin position="20"/>
        <end position="25"/>
    </location>
</feature>
<feature type="binding site" evidence="1">
    <location>
        <begin position="12"/>
        <end position="15"/>
    </location>
    <ligand>
        <name>ATP</name>
        <dbReference type="ChEBI" id="CHEBI:30616"/>
    </ligand>
</feature>
<feature type="binding site" evidence="1">
    <location>
        <position position="54"/>
    </location>
    <ligand>
        <name>UMP</name>
        <dbReference type="ChEBI" id="CHEBI:57865"/>
    </ligand>
</feature>
<feature type="binding site" evidence="1">
    <location>
        <position position="55"/>
    </location>
    <ligand>
        <name>ATP</name>
        <dbReference type="ChEBI" id="CHEBI:30616"/>
    </ligand>
</feature>
<feature type="binding site" evidence="1">
    <location>
        <position position="59"/>
    </location>
    <ligand>
        <name>ATP</name>
        <dbReference type="ChEBI" id="CHEBI:30616"/>
    </ligand>
</feature>
<feature type="binding site" evidence="1">
    <location>
        <position position="74"/>
    </location>
    <ligand>
        <name>UMP</name>
        <dbReference type="ChEBI" id="CHEBI:57865"/>
    </ligand>
</feature>
<feature type="binding site" evidence="1">
    <location>
        <begin position="135"/>
        <end position="142"/>
    </location>
    <ligand>
        <name>UMP</name>
        <dbReference type="ChEBI" id="CHEBI:57865"/>
    </ligand>
</feature>
<feature type="binding site" evidence="1">
    <location>
        <position position="163"/>
    </location>
    <ligand>
        <name>ATP</name>
        <dbReference type="ChEBI" id="CHEBI:30616"/>
    </ligand>
</feature>
<feature type="binding site" evidence="1">
    <location>
        <position position="169"/>
    </location>
    <ligand>
        <name>ATP</name>
        <dbReference type="ChEBI" id="CHEBI:30616"/>
    </ligand>
</feature>
<feature type="binding site" evidence="1">
    <location>
        <position position="172"/>
    </location>
    <ligand>
        <name>ATP</name>
        <dbReference type="ChEBI" id="CHEBI:30616"/>
    </ligand>
</feature>
<protein>
    <recommendedName>
        <fullName evidence="1">Uridylate kinase</fullName>
        <shortName evidence="1">UK</shortName>
        <ecNumber evidence="1">2.7.4.22</ecNumber>
    </recommendedName>
    <alternativeName>
        <fullName evidence="1">Uridine monophosphate kinase</fullName>
        <shortName evidence="1">UMP kinase</shortName>
        <shortName evidence="1">UMPK</shortName>
    </alternativeName>
</protein>
<dbReference type="EC" id="2.7.4.22" evidence="1"/>
<dbReference type="EMBL" id="AL596168">
    <property type="protein sequence ID" value="CAC96581.1"/>
    <property type="molecule type" value="Genomic_DNA"/>
</dbReference>
<dbReference type="PIR" id="AE1601">
    <property type="entry name" value="AE1601"/>
</dbReference>
<dbReference type="RefSeq" id="WP_003723449.1">
    <property type="nucleotide sequence ID" value="NC_003212.1"/>
</dbReference>
<dbReference type="SMR" id="P65928"/>
<dbReference type="STRING" id="272626.gene:17565681"/>
<dbReference type="DNASU" id="1129942"/>
<dbReference type="GeneID" id="93239189"/>
<dbReference type="KEGG" id="lin:smbA"/>
<dbReference type="eggNOG" id="COG0528">
    <property type="taxonomic scope" value="Bacteria"/>
</dbReference>
<dbReference type="HOGENOM" id="CLU_033861_0_0_9"/>
<dbReference type="OrthoDB" id="9807458at2"/>
<dbReference type="UniPathway" id="UPA00159">
    <property type="reaction ID" value="UER00275"/>
</dbReference>
<dbReference type="Proteomes" id="UP000002513">
    <property type="component" value="Chromosome"/>
</dbReference>
<dbReference type="GO" id="GO:0005737">
    <property type="term" value="C:cytoplasm"/>
    <property type="evidence" value="ECO:0007669"/>
    <property type="project" value="UniProtKB-SubCell"/>
</dbReference>
<dbReference type="GO" id="GO:0005524">
    <property type="term" value="F:ATP binding"/>
    <property type="evidence" value="ECO:0007669"/>
    <property type="project" value="UniProtKB-KW"/>
</dbReference>
<dbReference type="GO" id="GO:0033862">
    <property type="term" value="F:UMP kinase activity"/>
    <property type="evidence" value="ECO:0007669"/>
    <property type="project" value="UniProtKB-EC"/>
</dbReference>
<dbReference type="GO" id="GO:0044210">
    <property type="term" value="P:'de novo' CTP biosynthetic process"/>
    <property type="evidence" value="ECO:0007669"/>
    <property type="project" value="UniProtKB-UniRule"/>
</dbReference>
<dbReference type="GO" id="GO:0006225">
    <property type="term" value="P:UDP biosynthetic process"/>
    <property type="evidence" value="ECO:0007669"/>
    <property type="project" value="TreeGrafter"/>
</dbReference>
<dbReference type="CDD" id="cd04254">
    <property type="entry name" value="AAK_UMPK-PyrH-Ec"/>
    <property type="match status" value="1"/>
</dbReference>
<dbReference type="FunFam" id="3.40.1160.10:FF:000001">
    <property type="entry name" value="Uridylate kinase"/>
    <property type="match status" value="1"/>
</dbReference>
<dbReference type="Gene3D" id="3.40.1160.10">
    <property type="entry name" value="Acetylglutamate kinase-like"/>
    <property type="match status" value="1"/>
</dbReference>
<dbReference type="HAMAP" id="MF_01220_B">
    <property type="entry name" value="PyrH_B"/>
    <property type="match status" value="1"/>
</dbReference>
<dbReference type="InterPro" id="IPR036393">
    <property type="entry name" value="AceGlu_kinase-like_sf"/>
</dbReference>
<dbReference type="InterPro" id="IPR001048">
    <property type="entry name" value="Asp/Glu/Uridylate_kinase"/>
</dbReference>
<dbReference type="InterPro" id="IPR011817">
    <property type="entry name" value="Uridylate_kinase"/>
</dbReference>
<dbReference type="InterPro" id="IPR015963">
    <property type="entry name" value="Uridylate_kinase_bac"/>
</dbReference>
<dbReference type="NCBIfam" id="TIGR02075">
    <property type="entry name" value="pyrH_bact"/>
    <property type="match status" value="1"/>
</dbReference>
<dbReference type="PANTHER" id="PTHR42833">
    <property type="entry name" value="URIDYLATE KINASE"/>
    <property type="match status" value="1"/>
</dbReference>
<dbReference type="PANTHER" id="PTHR42833:SF4">
    <property type="entry name" value="URIDYLATE KINASE PUMPKIN, CHLOROPLASTIC"/>
    <property type="match status" value="1"/>
</dbReference>
<dbReference type="Pfam" id="PF00696">
    <property type="entry name" value="AA_kinase"/>
    <property type="match status" value="1"/>
</dbReference>
<dbReference type="PIRSF" id="PIRSF005650">
    <property type="entry name" value="Uridylate_kin"/>
    <property type="match status" value="1"/>
</dbReference>
<dbReference type="SUPFAM" id="SSF53633">
    <property type="entry name" value="Carbamate kinase-like"/>
    <property type="match status" value="1"/>
</dbReference>
<comment type="function">
    <text evidence="1">Catalyzes the reversible phosphorylation of UMP to UDP.</text>
</comment>
<comment type="catalytic activity">
    <reaction evidence="1">
        <text>UMP + ATP = UDP + ADP</text>
        <dbReference type="Rhea" id="RHEA:24400"/>
        <dbReference type="ChEBI" id="CHEBI:30616"/>
        <dbReference type="ChEBI" id="CHEBI:57865"/>
        <dbReference type="ChEBI" id="CHEBI:58223"/>
        <dbReference type="ChEBI" id="CHEBI:456216"/>
        <dbReference type="EC" id="2.7.4.22"/>
    </reaction>
</comment>
<comment type="activity regulation">
    <text evidence="1">Allosterically activated by GTP. Inhibited by UTP.</text>
</comment>
<comment type="pathway">
    <text evidence="1">Pyrimidine metabolism; CTP biosynthesis via de novo pathway; UDP from UMP (UMPK route): step 1/1.</text>
</comment>
<comment type="subunit">
    <text evidence="1">Homohexamer.</text>
</comment>
<comment type="subcellular location">
    <subcellularLocation>
        <location evidence="1">Cytoplasm</location>
    </subcellularLocation>
</comment>
<comment type="similarity">
    <text evidence="1">Belongs to the UMP kinase family.</text>
</comment>
<evidence type="ECO:0000255" key="1">
    <source>
        <dbReference type="HAMAP-Rule" id="MF_01220"/>
    </source>
</evidence>